<proteinExistence type="evidence at transcript level"/>
<protein>
    <recommendedName>
        <fullName>Abhydrolase domain-containing protein 2</fullName>
        <ecNumber>3.1.1.-</ecNumber>
    </recommendedName>
</protein>
<evidence type="ECO:0000250" key="1"/>
<evidence type="ECO:0000255" key="2"/>
<evidence type="ECO:0000269" key="3">
    <source>
    </source>
</evidence>
<evidence type="ECO:0000305" key="4"/>
<organism>
    <name type="scientific">Drosophila melanogaster</name>
    <name type="common">Fruit fly</name>
    <dbReference type="NCBI Taxonomy" id="7227"/>
    <lineage>
        <taxon>Eukaryota</taxon>
        <taxon>Metazoa</taxon>
        <taxon>Ecdysozoa</taxon>
        <taxon>Arthropoda</taxon>
        <taxon>Hexapoda</taxon>
        <taxon>Insecta</taxon>
        <taxon>Pterygota</taxon>
        <taxon>Neoptera</taxon>
        <taxon>Endopterygota</taxon>
        <taxon>Diptera</taxon>
        <taxon>Brachycera</taxon>
        <taxon>Muscomorpha</taxon>
        <taxon>Ephydroidea</taxon>
        <taxon>Drosophilidae</taxon>
        <taxon>Drosophila</taxon>
        <taxon>Sophophora</taxon>
    </lineage>
</organism>
<reference key="1">
    <citation type="submission" date="1995-06" db="EMBL/GenBank/DDBJ databases">
        <title>Identification of a Drosophila gene with sequence similarity to human pHPS1-2.</title>
        <authorList>
            <person name="Chartoff E.H."/>
            <person name="Gelbart W.M."/>
        </authorList>
    </citation>
    <scope>NUCLEOTIDE SEQUENCE [MRNA]</scope>
</reference>
<reference key="2">
    <citation type="journal article" date="2000" name="Science">
        <title>The genome sequence of Drosophila melanogaster.</title>
        <authorList>
            <person name="Adams M.D."/>
            <person name="Celniker S.E."/>
            <person name="Holt R.A."/>
            <person name="Evans C.A."/>
            <person name="Gocayne J.D."/>
            <person name="Amanatides P.G."/>
            <person name="Scherer S.E."/>
            <person name="Li P.W."/>
            <person name="Hoskins R.A."/>
            <person name="Galle R.F."/>
            <person name="George R.A."/>
            <person name="Lewis S.E."/>
            <person name="Richards S."/>
            <person name="Ashburner M."/>
            <person name="Henderson S.N."/>
            <person name="Sutton G.G."/>
            <person name="Wortman J.R."/>
            <person name="Yandell M.D."/>
            <person name="Zhang Q."/>
            <person name="Chen L.X."/>
            <person name="Brandon R.C."/>
            <person name="Rogers Y.-H.C."/>
            <person name="Blazej R.G."/>
            <person name="Champe M."/>
            <person name="Pfeiffer B.D."/>
            <person name="Wan K.H."/>
            <person name="Doyle C."/>
            <person name="Baxter E.G."/>
            <person name="Helt G."/>
            <person name="Nelson C.R."/>
            <person name="Miklos G.L.G."/>
            <person name="Abril J.F."/>
            <person name="Agbayani A."/>
            <person name="An H.-J."/>
            <person name="Andrews-Pfannkoch C."/>
            <person name="Baldwin D."/>
            <person name="Ballew R.M."/>
            <person name="Basu A."/>
            <person name="Baxendale J."/>
            <person name="Bayraktaroglu L."/>
            <person name="Beasley E.M."/>
            <person name="Beeson K.Y."/>
            <person name="Benos P.V."/>
            <person name="Berman B.P."/>
            <person name="Bhandari D."/>
            <person name="Bolshakov S."/>
            <person name="Borkova D."/>
            <person name="Botchan M.R."/>
            <person name="Bouck J."/>
            <person name="Brokstein P."/>
            <person name="Brottier P."/>
            <person name="Burtis K.C."/>
            <person name="Busam D.A."/>
            <person name="Butler H."/>
            <person name="Cadieu E."/>
            <person name="Center A."/>
            <person name="Chandra I."/>
            <person name="Cherry J.M."/>
            <person name="Cawley S."/>
            <person name="Dahlke C."/>
            <person name="Davenport L.B."/>
            <person name="Davies P."/>
            <person name="de Pablos B."/>
            <person name="Delcher A."/>
            <person name="Deng Z."/>
            <person name="Mays A.D."/>
            <person name="Dew I."/>
            <person name="Dietz S.M."/>
            <person name="Dodson K."/>
            <person name="Doup L.E."/>
            <person name="Downes M."/>
            <person name="Dugan-Rocha S."/>
            <person name="Dunkov B.C."/>
            <person name="Dunn P."/>
            <person name="Durbin K.J."/>
            <person name="Evangelista C.C."/>
            <person name="Ferraz C."/>
            <person name="Ferriera S."/>
            <person name="Fleischmann W."/>
            <person name="Fosler C."/>
            <person name="Gabrielian A.E."/>
            <person name="Garg N.S."/>
            <person name="Gelbart W.M."/>
            <person name="Glasser K."/>
            <person name="Glodek A."/>
            <person name="Gong F."/>
            <person name="Gorrell J.H."/>
            <person name="Gu Z."/>
            <person name="Guan P."/>
            <person name="Harris M."/>
            <person name="Harris N.L."/>
            <person name="Harvey D.A."/>
            <person name="Heiman T.J."/>
            <person name="Hernandez J.R."/>
            <person name="Houck J."/>
            <person name="Hostin D."/>
            <person name="Houston K.A."/>
            <person name="Howland T.J."/>
            <person name="Wei M.-H."/>
            <person name="Ibegwam C."/>
            <person name="Jalali M."/>
            <person name="Kalush F."/>
            <person name="Karpen G.H."/>
            <person name="Ke Z."/>
            <person name="Kennison J.A."/>
            <person name="Ketchum K.A."/>
            <person name="Kimmel B.E."/>
            <person name="Kodira C.D."/>
            <person name="Kraft C.L."/>
            <person name="Kravitz S."/>
            <person name="Kulp D."/>
            <person name="Lai Z."/>
            <person name="Lasko P."/>
            <person name="Lei Y."/>
            <person name="Levitsky A.A."/>
            <person name="Li J.H."/>
            <person name="Li Z."/>
            <person name="Liang Y."/>
            <person name="Lin X."/>
            <person name="Liu X."/>
            <person name="Mattei B."/>
            <person name="McIntosh T.C."/>
            <person name="McLeod M.P."/>
            <person name="McPherson D."/>
            <person name="Merkulov G."/>
            <person name="Milshina N.V."/>
            <person name="Mobarry C."/>
            <person name="Morris J."/>
            <person name="Moshrefi A."/>
            <person name="Mount S.M."/>
            <person name="Moy M."/>
            <person name="Murphy B."/>
            <person name="Murphy L."/>
            <person name="Muzny D.M."/>
            <person name="Nelson D.L."/>
            <person name="Nelson D.R."/>
            <person name="Nelson K.A."/>
            <person name="Nixon K."/>
            <person name="Nusskern D.R."/>
            <person name="Pacleb J.M."/>
            <person name="Palazzolo M."/>
            <person name="Pittman G.S."/>
            <person name="Pan S."/>
            <person name="Pollard J."/>
            <person name="Puri V."/>
            <person name="Reese M.G."/>
            <person name="Reinert K."/>
            <person name="Remington K."/>
            <person name="Saunders R.D.C."/>
            <person name="Scheeler F."/>
            <person name="Shen H."/>
            <person name="Shue B.C."/>
            <person name="Siden-Kiamos I."/>
            <person name="Simpson M."/>
            <person name="Skupski M.P."/>
            <person name="Smith T.J."/>
            <person name="Spier E."/>
            <person name="Spradling A.C."/>
            <person name="Stapleton M."/>
            <person name="Strong R."/>
            <person name="Sun E."/>
            <person name="Svirskas R."/>
            <person name="Tector C."/>
            <person name="Turner R."/>
            <person name="Venter E."/>
            <person name="Wang A.H."/>
            <person name="Wang X."/>
            <person name="Wang Z.-Y."/>
            <person name="Wassarman D.A."/>
            <person name="Weinstock G.M."/>
            <person name="Weissenbach J."/>
            <person name="Williams S.M."/>
            <person name="Woodage T."/>
            <person name="Worley K.C."/>
            <person name="Wu D."/>
            <person name="Yang S."/>
            <person name="Yao Q.A."/>
            <person name="Ye J."/>
            <person name="Yeh R.-F."/>
            <person name="Zaveri J.S."/>
            <person name="Zhan M."/>
            <person name="Zhang G."/>
            <person name="Zhao Q."/>
            <person name="Zheng L."/>
            <person name="Zheng X.H."/>
            <person name="Zhong F.N."/>
            <person name="Zhong W."/>
            <person name="Zhou X."/>
            <person name="Zhu S.C."/>
            <person name="Zhu X."/>
            <person name="Smith H.O."/>
            <person name="Gibbs R.A."/>
            <person name="Myers E.W."/>
            <person name="Rubin G.M."/>
            <person name="Venter J.C."/>
        </authorList>
    </citation>
    <scope>NUCLEOTIDE SEQUENCE [LARGE SCALE GENOMIC DNA]</scope>
    <source>
        <strain>Berkeley</strain>
    </source>
</reference>
<reference key="3">
    <citation type="journal article" date="2002" name="Genome Biol.">
        <title>Annotation of the Drosophila melanogaster euchromatic genome: a systematic review.</title>
        <authorList>
            <person name="Misra S."/>
            <person name="Crosby M.A."/>
            <person name="Mungall C.J."/>
            <person name="Matthews B.B."/>
            <person name="Campbell K.S."/>
            <person name="Hradecky P."/>
            <person name="Huang Y."/>
            <person name="Kaminker J.S."/>
            <person name="Millburn G.H."/>
            <person name="Prochnik S.E."/>
            <person name="Smith C.D."/>
            <person name="Tupy J.L."/>
            <person name="Whitfield E.J."/>
            <person name="Bayraktaroglu L."/>
            <person name="Berman B.P."/>
            <person name="Bettencourt B.R."/>
            <person name="Celniker S.E."/>
            <person name="de Grey A.D.N.J."/>
            <person name="Drysdale R.A."/>
            <person name="Harris N.L."/>
            <person name="Richter J."/>
            <person name="Russo S."/>
            <person name="Schroeder A.J."/>
            <person name="Shu S.Q."/>
            <person name="Stapleton M."/>
            <person name="Yamada C."/>
            <person name="Ashburner M."/>
            <person name="Gelbart W.M."/>
            <person name="Rubin G.M."/>
            <person name="Lewis S.E."/>
        </authorList>
    </citation>
    <scope>GENOME REANNOTATION</scope>
    <source>
        <strain>Berkeley</strain>
    </source>
</reference>
<reference key="4">
    <citation type="submission" date="2003-08" db="EMBL/GenBank/DDBJ databases">
        <authorList>
            <person name="Stapleton M."/>
            <person name="Brokstein P."/>
            <person name="Hong L."/>
            <person name="Agbayani A."/>
            <person name="Carlson J.W."/>
            <person name="Champe M."/>
            <person name="Chavez C."/>
            <person name="Dorsett V."/>
            <person name="Dresnek D."/>
            <person name="Farfan D."/>
            <person name="Frise E."/>
            <person name="George R.A."/>
            <person name="Gonzalez M."/>
            <person name="Guarin H."/>
            <person name="Kronmiller B."/>
            <person name="Li P.W."/>
            <person name="Liao G."/>
            <person name="Miranda A."/>
            <person name="Mungall C.J."/>
            <person name="Nunoo J."/>
            <person name="Pacleb J.M."/>
            <person name="Paragas V."/>
            <person name="Park S."/>
            <person name="Patel S."/>
            <person name="Phouanenavong S."/>
            <person name="Wan K.H."/>
            <person name="Yu C."/>
            <person name="Lewis S.E."/>
            <person name="Rubin G.M."/>
            <person name="Celniker S.E."/>
        </authorList>
    </citation>
    <scope>NUCLEOTIDE SEQUENCE [LARGE SCALE MRNA]</scope>
    <source>
        <strain>Berkeley</strain>
        <tissue>Embryo</tissue>
    </source>
</reference>
<reference key="5">
    <citation type="journal article" date="2003" name="J. Mol. Evol.">
        <title>Alpha/beta hydrolase2, a predicated gene adjacent to mad in Drosophila melanogaster, belongs to a new global multigene family and is associated with obesity.</title>
        <authorList>
            <person name="Wisotzkey R.G."/>
            <person name="Johnson A.N."/>
            <person name="Takaesu N.T."/>
            <person name="Newfeld S.J."/>
        </authorList>
    </citation>
    <scope>IDENTIFICATION</scope>
    <scope>DEVELOPMENTAL STAGE</scope>
</reference>
<feature type="chain" id="PRO_0000212459" description="Abhydrolase domain-containing protein 2">
    <location>
        <begin position="1"/>
        <end position="398"/>
    </location>
</feature>
<feature type="topological domain" description="Cytoplasmic" evidence="2">
    <location>
        <begin position="1"/>
        <end position="4"/>
    </location>
</feature>
<feature type="transmembrane region" description="Helical; Signal-anchor for type II membrane protein" evidence="2">
    <location>
        <begin position="5"/>
        <end position="22"/>
    </location>
</feature>
<feature type="topological domain" description="Extracellular" evidence="2">
    <location>
        <begin position="23"/>
        <end position="398"/>
    </location>
</feature>
<feature type="domain" description="AB hydrolase-1" evidence="2">
    <location>
        <begin position="113"/>
        <end position="365"/>
    </location>
</feature>
<feature type="active site" description="Charge relay system" evidence="1">
    <location>
        <position position="192"/>
    </location>
</feature>
<feature type="active site" description="Charge relay system" evidence="1">
    <location>
        <position position="328"/>
    </location>
</feature>
<feature type="active site" description="Charge relay system" evidence="1">
    <location>
        <position position="359"/>
    </location>
</feature>
<feature type="sequence conflict" description="In Ref. 1; AAA99735." evidence="4" ref="1">
    <original>D</original>
    <variation>N</variation>
    <location>
        <position position="211"/>
    </location>
</feature>
<feature type="sequence conflict" description="In Ref. 1; AAA99735." evidence="4" ref="1">
    <original>Y</original>
    <variation>I</variation>
    <location>
        <position position="223"/>
    </location>
</feature>
<dbReference type="EC" id="3.1.1.-"/>
<dbReference type="EMBL" id="U29170">
    <property type="protein sequence ID" value="AAA99735.1"/>
    <property type="molecule type" value="mRNA"/>
</dbReference>
<dbReference type="EMBL" id="AE014134">
    <property type="protein sequence ID" value="AAF51139.1"/>
    <property type="molecule type" value="Genomic_DNA"/>
</dbReference>
<dbReference type="EMBL" id="BT010082">
    <property type="protein sequence ID" value="AAQ22551.1"/>
    <property type="molecule type" value="mRNA"/>
</dbReference>
<dbReference type="RefSeq" id="NP_001245852.1">
    <property type="nucleotide sequence ID" value="NM_001258923.2"/>
</dbReference>
<dbReference type="RefSeq" id="NP_608751.2">
    <property type="nucleotide sequence ID" value="NM_134907.4"/>
</dbReference>
<dbReference type="BioGRID" id="59747">
    <property type="interactions" value="4"/>
</dbReference>
<dbReference type="DIP" id="DIP-17906N"/>
<dbReference type="FunCoup" id="Q24093">
    <property type="interactions" value="13"/>
</dbReference>
<dbReference type="IntAct" id="Q24093">
    <property type="interactions" value="1"/>
</dbReference>
<dbReference type="STRING" id="7227.FBpp0300634"/>
<dbReference type="ESTHER" id="drome-abhd2">
    <property type="family name" value="abh_upf0017"/>
</dbReference>
<dbReference type="PaxDb" id="7227-FBpp0300634"/>
<dbReference type="DNASU" id="33532"/>
<dbReference type="EnsemblMetazoa" id="FBtr0077576">
    <property type="protein sequence ID" value="FBpp0077265"/>
    <property type="gene ID" value="FBgn0014906"/>
</dbReference>
<dbReference type="EnsemblMetazoa" id="FBtr0308315">
    <property type="protein sequence ID" value="FBpp0300634"/>
    <property type="gene ID" value="FBgn0014906"/>
</dbReference>
<dbReference type="GeneID" id="33532"/>
<dbReference type="KEGG" id="dme:Dmel_CG3488"/>
<dbReference type="UCSC" id="CG3488-RA">
    <property type="organism name" value="d. melanogaster"/>
</dbReference>
<dbReference type="AGR" id="FB:FBgn0014906"/>
<dbReference type="CTD" id="33532"/>
<dbReference type="FlyBase" id="FBgn0014906">
    <property type="gene designation" value="Hydr2"/>
</dbReference>
<dbReference type="VEuPathDB" id="VectorBase:FBgn0014906"/>
<dbReference type="eggNOG" id="KOG1838">
    <property type="taxonomic scope" value="Eukaryota"/>
</dbReference>
<dbReference type="GeneTree" id="ENSGT00950000182902"/>
<dbReference type="InParanoid" id="Q24093"/>
<dbReference type="OMA" id="HCTGEDV"/>
<dbReference type="OrthoDB" id="5954035at2759"/>
<dbReference type="PhylomeDB" id="Q24093"/>
<dbReference type="BioGRID-ORCS" id="33532">
    <property type="hits" value="0 hits in 1 CRISPR screen"/>
</dbReference>
<dbReference type="GenomeRNAi" id="33532"/>
<dbReference type="PRO" id="PR:Q24093"/>
<dbReference type="Proteomes" id="UP000000803">
    <property type="component" value="Chromosome 2L"/>
</dbReference>
<dbReference type="Bgee" id="FBgn0014906">
    <property type="expression patterns" value="Expressed in seminal fluid secreting gland and 160 other cell types or tissues"/>
</dbReference>
<dbReference type="ExpressionAtlas" id="Q24093">
    <property type="expression patterns" value="baseline and differential"/>
</dbReference>
<dbReference type="GO" id="GO:0036126">
    <property type="term" value="C:sperm flagellum"/>
    <property type="evidence" value="ECO:0000318"/>
    <property type="project" value="GO_Central"/>
</dbReference>
<dbReference type="GO" id="GO:0097524">
    <property type="term" value="C:sperm plasma membrane"/>
    <property type="evidence" value="ECO:0000318"/>
    <property type="project" value="GO_Central"/>
</dbReference>
<dbReference type="GO" id="GO:0008126">
    <property type="term" value="F:acetylesterase activity"/>
    <property type="evidence" value="ECO:0000318"/>
    <property type="project" value="GO_Central"/>
</dbReference>
<dbReference type="GO" id="GO:0016298">
    <property type="term" value="F:lipase activity"/>
    <property type="evidence" value="ECO:0000315"/>
    <property type="project" value="FlyBase"/>
</dbReference>
<dbReference type="GO" id="GO:0047372">
    <property type="term" value="F:monoacylglycerol lipase activity"/>
    <property type="evidence" value="ECO:0000318"/>
    <property type="project" value="GO_Central"/>
</dbReference>
<dbReference type="GO" id="GO:0046464">
    <property type="term" value="P:acylglycerol catabolic process"/>
    <property type="evidence" value="ECO:0000318"/>
    <property type="project" value="GO_Central"/>
</dbReference>
<dbReference type="GO" id="GO:0006629">
    <property type="term" value="P:lipid metabolic process"/>
    <property type="evidence" value="ECO:0000315"/>
    <property type="project" value="FlyBase"/>
</dbReference>
<dbReference type="GO" id="GO:0051792">
    <property type="term" value="P:medium-chain fatty acid biosynthetic process"/>
    <property type="evidence" value="ECO:0000318"/>
    <property type="project" value="GO_Central"/>
</dbReference>
<dbReference type="GO" id="GO:0051793">
    <property type="term" value="P:medium-chain fatty acid catabolic process"/>
    <property type="evidence" value="ECO:0000318"/>
    <property type="project" value="GO_Central"/>
</dbReference>
<dbReference type="GO" id="GO:0048240">
    <property type="term" value="P:sperm capacitation"/>
    <property type="evidence" value="ECO:0000318"/>
    <property type="project" value="GO_Central"/>
</dbReference>
<dbReference type="GO" id="GO:0043401">
    <property type="term" value="P:steroid hormone receptor signaling pathway"/>
    <property type="evidence" value="ECO:0000318"/>
    <property type="project" value="GO_Central"/>
</dbReference>
<dbReference type="FunFam" id="3.40.50.1820:FF:000208">
    <property type="entry name" value="Adenosine deaminase CECR1-A"/>
    <property type="match status" value="1"/>
</dbReference>
<dbReference type="Gene3D" id="3.40.50.1820">
    <property type="entry name" value="alpha/beta hydrolase"/>
    <property type="match status" value="1"/>
</dbReference>
<dbReference type="InterPro" id="IPR000073">
    <property type="entry name" value="AB_hydrolase_1"/>
</dbReference>
<dbReference type="InterPro" id="IPR000952">
    <property type="entry name" value="AB_hydrolase_4_CS"/>
</dbReference>
<dbReference type="InterPro" id="IPR050960">
    <property type="entry name" value="AB_hydrolase_4_sf"/>
</dbReference>
<dbReference type="InterPro" id="IPR029058">
    <property type="entry name" value="AB_hydrolase_fold"/>
</dbReference>
<dbReference type="InterPro" id="IPR012020">
    <property type="entry name" value="ABHD4"/>
</dbReference>
<dbReference type="PANTHER" id="PTHR10794">
    <property type="entry name" value="ABHYDROLASE DOMAIN-CONTAINING PROTEIN"/>
    <property type="match status" value="1"/>
</dbReference>
<dbReference type="PANTHER" id="PTHR10794:SF45">
    <property type="entry name" value="MONOACYLGLYCEROL LIPASE ABHD2"/>
    <property type="match status" value="1"/>
</dbReference>
<dbReference type="Pfam" id="PF00561">
    <property type="entry name" value="Abhydrolase_1"/>
    <property type="match status" value="1"/>
</dbReference>
<dbReference type="PIRSF" id="PIRSF005211">
    <property type="entry name" value="Ab_hydro_YheT"/>
    <property type="match status" value="1"/>
</dbReference>
<dbReference type="SUPFAM" id="SSF53474">
    <property type="entry name" value="alpha/beta-Hydrolases"/>
    <property type="match status" value="1"/>
</dbReference>
<dbReference type="PROSITE" id="PS01133">
    <property type="entry name" value="UPF0017"/>
    <property type="match status" value="1"/>
</dbReference>
<name>ABHD2_DROME</name>
<gene>
    <name type="primary">Hydr2</name>
    <name type="synonym">anon-23D</name>
    <name type="synonym">anon-23Da</name>
    <name type="ORF">CG3488</name>
</gene>
<accession>Q24093</accession>
<accession>Q9VQM6</accession>
<keyword id="KW-0378">Hydrolase</keyword>
<keyword id="KW-0472">Membrane</keyword>
<keyword id="KW-1185">Reference proteome</keyword>
<keyword id="KW-0719">Serine esterase</keyword>
<keyword id="KW-0735">Signal-anchor</keyword>
<keyword id="KW-0812">Transmembrane</keyword>
<keyword id="KW-1133">Transmembrane helix</keyword>
<sequence>MSTAFLTLIAVIVCILFRILNVHSQPLKPSVWCLDAHFLDCLYKIAPVLREPYIPPRLWGFSGHVQTVLHSIVGRVRCPWPLGERVYMSLKDGSTLTYDLYQPLNEQEDDITVAICPGIANSSESVYIRTFVHLAQCNGYRCAVLNHIGALRSVQVTSTRIFTYGHTEDFAAMVEHLHQKYRQSRIVAVGFSLGGNLVTKYMGEDQKTKPDKVIGGISICQGYNAVEGTKWLLNWQNFRRFYLYIMTENVKSIILRHRHILLSDEVKARHNLNEREIIAAATLPELDEAYTRRVYNFPSTQELYKWSSSLFYFDTIKKPMIFINAKDDPLIPEDLLHPIKEYATTRQNTAYVEVAHGGHLGFYEGGFLYPNPVTWLDRTLVAMVGSLVMMHEVGKVAP</sequence>
<comment type="subcellular location">
    <subcellularLocation>
        <location evidence="4">Membrane</location>
        <topology evidence="4">Single-pass type II membrane protein</topology>
    </subcellularLocation>
</comment>
<comment type="developmental stage">
    <text evidence="3">Expressed in embryos.</text>
</comment>
<comment type="similarity">
    <text evidence="4">Belongs to the AB hydrolase superfamily. AB hydrolase 4 family.</text>
</comment>